<organism>
    <name type="scientific">Mycobacterium leprae (strain Br4923)</name>
    <dbReference type="NCBI Taxonomy" id="561304"/>
    <lineage>
        <taxon>Bacteria</taxon>
        <taxon>Bacillati</taxon>
        <taxon>Actinomycetota</taxon>
        <taxon>Actinomycetes</taxon>
        <taxon>Mycobacteriales</taxon>
        <taxon>Mycobacteriaceae</taxon>
        <taxon>Mycobacterium</taxon>
    </lineage>
</organism>
<reference key="1">
    <citation type="journal article" date="2009" name="Nat. Genet.">
        <title>Comparative genomic and phylogeographic analysis of Mycobacterium leprae.</title>
        <authorList>
            <person name="Monot M."/>
            <person name="Honore N."/>
            <person name="Garnier T."/>
            <person name="Zidane N."/>
            <person name="Sherafi D."/>
            <person name="Paniz-Mondolfi A."/>
            <person name="Matsuoka M."/>
            <person name="Taylor G.M."/>
            <person name="Donoghue H.D."/>
            <person name="Bouwman A."/>
            <person name="Mays S."/>
            <person name="Watson C."/>
            <person name="Lockwood D."/>
            <person name="Khamispour A."/>
            <person name="Dowlati Y."/>
            <person name="Jianping S."/>
            <person name="Rea T.H."/>
            <person name="Vera-Cabrera L."/>
            <person name="Stefani M.M."/>
            <person name="Banu S."/>
            <person name="Macdonald M."/>
            <person name="Sapkota B.R."/>
            <person name="Spencer J.S."/>
            <person name="Thomas J."/>
            <person name="Harshman K."/>
            <person name="Singh P."/>
            <person name="Busso P."/>
            <person name="Gattiker A."/>
            <person name="Rougemont J."/>
            <person name="Brennan P.J."/>
            <person name="Cole S.T."/>
        </authorList>
    </citation>
    <scope>NUCLEOTIDE SEQUENCE [LARGE SCALE GENOMIC DNA]</scope>
    <source>
        <strain>Br4923</strain>
    </source>
</reference>
<gene>
    <name evidence="1" type="primary">rpsJ</name>
    <name type="ordered locus">MLBr01864</name>
</gene>
<accession>B8ZSC0</accession>
<proteinExistence type="inferred from homology"/>
<keyword id="KW-0687">Ribonucleoprotein</keyword>
<keyword id="KW-0689">Ribosomal protein</keyword>
<evidence type="ECO:0000255" key="1">
    <source>
        <dbReference type="HAMAP-Rule" id="MF_00508"/>
    </source>
</evidence>
<evidence type="ECO:0000305" key="2"/>
<comment type="function">
    <text evidence="1">Involved in the binding of tRNA to the ribosomes.</text>
</comment>
<comment type="subunit">
    <text evidence="1">Part of the 30S ribosomal subunit.</text>
</comment>
<comment type="similarity">
    <text evidence="1">Belongs to the universal ribosomal protein uS10 family.</text>
</comment>
<protein>
    <recommendedName>
        <fullName evidence="1">Small ribosomal subunit protein uS10</fullName>
    </recommendedName>
    <alternativeName>
        <fullName evidence="2">30S ribosomal protein S10</fullName>
    </alternativeName>
</protein>
<dbReference type="EMBL" id="FM211192">
    <property type="protein sequence ID" value="CAR71960.1"/>
    <property type="molecule type" value="Genomic_DNA"/>
</dbReference>
<dbReference type="SMR" id="B8ZSC0"/>
<dbReference type="KEGG" id="mlb:MLBr01864"/>
<dbReference type="HOGENOM" id="CLU_122625_1_3_11"/>
<dbReference type="Proteomes" id="UP000006900">
    <property type="component" value="Chromosome"/>
</dbReference>
<dbReference type="GO" id="GO:1990904">
    <property type="term" value="C:ribonucleoprotein complex"/>
    <property type="evidence" value="ECO:0007669"/>
    <property type="project" value="UniProtKB-KW"/>
</dbReference>
<dbReference type="GO" id="GO:0005840">
    <property type="term" value="C:ribosome"/>
    <property type="evidence" value="ECO:0007669"/>
    <property type="project" value="UniProtKB-KW"/>
</dbReference>
<dbReference type="GO" id="GO:0003735">
    <property type="term" value="F:structural constituent of ribosome"/>
    <property type="evidence" value="ECO:0007669"/>
    <property type="project" value="InterPro"/>
</dbReference>
<dbReference type="GO" id="GO:0000049">
    <property type="term" value="F:tRNA binding"/>
    <property type="evidence" value="ECO:0007669"/>
    <property type="project" value="UniProtKB-UniRule"/>
</dbReference>
<dbReference type="GO" id="GO:0006412">
    <property type="term" value="P:translation"/>
    <property type="evidence" value="ECO:0007669"/>
    <property type="project" value="UniProtKB-UniRule"/>
</dbReference>
<dbReference type="FunFam" id="3.30.70.600:FF:000001">
    <property type="entry name" value="30S ribosomal protein S10"/>
    <property type="match status" value="1"/>
</dbReference>
<dbReference type="Gene3D" id="3.30.70.600">
    <property type="entry name" value="Ribosomal protein S10 domain"/>
    <property type="match status" value="1"/>
</dbReference>
<dbReference type="HAMAP" id="MF_00508">
    <property type="entry name" value="Ribosomal_uS10"/>
    <property type="match status" value="1"/>
</dbReference>
<dbReference type="InterPro" id="IPR001848">
    <property type="entry name" value="Ribosomal_uS10"/>
</dbReference>
<dbReference type="InterPro" id="IPR018268">
    <property type="entry name" value="Ribosomal_uS10_CS"/>
</dbReference>
<dbReference type="InterPro" id="IPR027486">
    <property type="entry name" value="Ribosomal_uS10_dom"/>
</dbReference>
<dbReference type="InterPro" id="IPR036838">
    <property type="entry name" value="Ribosomal_uS10_dom_sf"/>
</dbReference>
<dbReference type="NCBIfam" id="NF001861">
    <property type="entry name" value="PRK00596.1"/>
    <property type="match status" value="1"/>
</dbReference>
<dbReference type="NCBIfam" id="TIGR01049">
    <property type="entry name" value="rpsJ_bact"/>
    <property type="match status" value="1"/>
</dbReference>
<dbReference type="PANTHER" id="PTHR11700">
    <property type="entry name" value="30S RIBOSOMAL PROTEIN S10 FAMILY MEMBER"/>
    <property type="match status" value="1"/>
</dbReference>
<dbReference type="Pfam" id="PF00338">
    <property type="entry name" value="Ribosomal_S10"/>
    <property type="match status" value="1"/>
</dbReference>
<dbReference type="PRINTS" id="PR00971">
    <property type="entry name" value="RIBOSOMALS10"/>
</dbReference>
<dbReference type="SMART" id="SM01403">
    <property type="entry name" value="Ribosomal_S10"/>
    <property type="match status" value="1"/>
</dbReference>
<dbReference type="SUPFAM" id="SSF54999">
    <property type="entry name" value="Ribosomal protein S10"/>
    <property type="match status" value="1"/>
</dbReference>
<dbReference type="PROSITE" id="PS00361">
    <property type="entry name" value="RIBOSOMAL_S10"/>
    <property type="match status" value="1"/>
</dbReference>
<name>RS10_MYCLB</name>
<sequence>MAGQKIRIRLKAYDHEAIDASARKIVETVVRTGANVVGPVPLPTEKNVYCVIRSPHKYKDSREHFEMRTHKRLIDILDPTPKTVDALMRIDLPASVDVNIQ</sequence>
<feature type="chain" id="PRO_1000146067" description="Small ribosomal subunit protein uS10">
    <location>
        <begin position="1"/>
        <end position="101"/>
    </location>
</feature>